<keyword id="KW-0158">Chromosome</keyword>
<keyword id="KW-0238">DNA-binding</keyword>
<keyword id="KW-1017">Isopeptide bond</keyword>
<keyword id="KW-0539">Nucleus</keyword>
<keyword id="KW-0597">Phosphoprotein</keyword>
<keyword id="KW-1185">Reference proteome</keyword>
<keyword id="KW-0779">Telomere</keyword>
<keyword id="KW-0832">Ubl conjugation</keyword>
<organism>
    <name type="scientific">Rattus norvegicus</name>
    <name type="common">Rat</name>
    <dbReference type="NCBI Taxonomy" id="10116"/>
    <lineage>
        <taxon>Eukaryota</taxon>
        <taxon>Metazoa</taxon>
        <taxon>Chordata</taxon>
        <taxon>Craniata</taxon>
        <taxon>Vertebrata</taxon>
        <taxon>Euteleostomi</taxon>
        <taxon>Mammalia</taxon>
        <taxon>Eutheria</taxon>
        <taxon>Euarchontoglires</taxon>
        <taxon>Glires</taxon>
        <taxon>Rodentia</taxon>
        <taxon>Myomorpha</taxon>
        <taxon>Muroidea</taxon>
        <taxon>Muridae</taxon>
        <taxon>Murinae</taxon>
        <taxon>Rattus</taxon>
    </lineage>
</organism>
<reference key="1">
    <citation type="journal article" date="2004" name="Genome Res.">
        <title>The status, quality, and expansion of the NIH full-length cDNA project: the Mammalian Gene Collection (MGC).</title>
        <authorList>
            <consortium name="The MGC Project Team"/>
        </authorList>
    </citation>
    <scope>NUCLEOTIDE SEQUENCE [LARGE SCALE MRNA]</scope>
    <source>
        <tissue>Thymus</tissue>
    </source>
</reference>
<reference key="2">
    <citation type="journal article" date="2012" name="Nat. Commun.">
        <title>Quantitative maps of protein phosphorylation sites across 14 different rat organs and tissues.</title>
        <authorList>
            <person name="Lundby A."/>
            <person name="Secher A."/>
            <person name="Lage K."/>
            <person name="Nordsborg N.B."/>
            <person name="Dmytriyev A."/>
            <person name="Lundby C."/>
            <person name="Olsen J.V."/>
        </authorList>
    </citation>
    <scope>PHOSPHORYLATION [LARGE SCALE ANALYSIS] AT SER-25</scope>
    <scope>IDENTIFICATION BY MASS SPECTROMETRY [LARGE SCALE ANALYSIS]</scope>
</reference>
<comment type="function">
    <text evidence="3">Component of the shelterin complex (telosome) that is involved in the regulation of telomere length and protection. Shelterin associates with arrays of double-stranded TTAGGG repeats added by telomerase and protects chromosome ends. Without its protective activity, telomeres are no longer hidden from the DNA damage surveillance and chromosome ends are inappropriately processed by DNA repair pathways. Promotes binding of POT1 to single-stranded telomeric DNA. Modulates the inhibitory effects of POT1 on telomere elongation. The ACD-POT1 heterodimer enhances telomere elongation by recruiting telomerase to telomeres and increasing its processivity. May play a role in organogenesis.</text>
</comment>
<comment type="subunit">
    <text evidence="3">Component of the shelterin complex (telosome) composed of TERF1, TERF2, TINF2, TERF2IP ACD and POT1. Forms heterodimers with POT1. Identified in a complex with POT1 and single-stranded telomeric DNA. Interacts with STN1 and TINF2.</text>
</comment>
<comment type="subcellular location">
    <subcellularLocation>
        <location evidence="3">Nucleus</location>
    </subcellularLocation>
    <subcellularLocation>
        <location evidence="3">Chromosome</location>
        <location evidence="3">Telomere</location>
    </subcellularLocation>
</comment>
<feature type="chain" id="PRO_0000239021" description="Adrenocortical dysplasia protein homolog">
    <location>
        <begin position="1"/>
        <end position="417"/>
    </location>
</feature>
<feature type="region of interest" description="Interaction with POT1" evidence="1">
    <location>
        <begin position="156"/>
        <end position="245"/>
    </location>
</feature>
<feature type="region of interest" description="Disordered" evidence="4">
    <location>
        <begin position="237"/>
        <end position="309"/>
    </location>
</feature>
<feature type="short sequence motif" description="PWI">
    <location>
        <begin position="11"/>
        <end position="13"/>
    </location>
</feature>
<feature type="compositionally biased region" description="Polar residues" evidence="4">
    <location>
        <begin position="237"/>
        <end position="250"/>
    </location>
</feature>
<feature type="compositionally biased region" description="Polar residues" evidence="4">
    <location>
        <begin position="259"/>
        <end position="292"/>
    </location>
</feature>
<feature type="compositionally biased region" description="Low complexity" evidence="4">
    <location>
        <begin position="296"/>
        <end position="309"/>
    </location>
</feature>
<feature type="modified residue" description="Phosphoserine" evidence="7">
    <location>
        <position position="25"/>
    </location>
</feature>
<feature type="modified residue" description="Phosphoserine" evidence="2">
    <location>
        <position position="313"/>
    </location>
</feature>
<feature type="modified residue" description="Phosphoserine" evidence="3">
    <location>
        <position position="317"/>
    </location>
</feature>
<feature type="cross-link" description="Glycyl lysine isopeptide (Lys-Gly) (interchain with G-Cter in SUMO2)" evidence="3">
    <location>
        <position position="348"/>
    </location>
</feature>
<evidence type="ECO:0000250" key="1"/>
<evidence type="ECO:0000250" key="2">
    <source>
        <dbReference type="UniProtKB" id="Q5EE38"/>
    </source>
</evidence>
<evidence type="ECO:0000250" key="3">
    <source>
        <dbReference type="UniProtKB" id="Q96AP0"/>
    </source>
</evidence>
<evidence type="ECO:0000256" key="4">
    <source>
        <dbReference type="SAM" id="MobiDB-lite"/>
    </source>
</evidence>
<evidence type="ECO:0000305" key="5"/>
<evidence type="ECO:0000312" key="6">
    <source>
        <dbReference type="RGD" id="1565053"/>
    </source>
</evidence>
<evidence type="ECO:0007744" key="7">
    <source>
    </source>
</evidence>
<dbReference type="EMBL" id="BC099222">
    <property type="protein sequence ID" value="AAH99222.1"/>
    <property type="molecule type" value="mRNA"/>
</dbReference>
<dbReference type="RefSeq" id="NP_001032270.1">
    <property type="nucleotide sequence ID" value="NM_001037193.1"/>
</dbReference>
<dbReference type="SMR" id="Q4FZR5"/>
<dbReference type="FunCoup" id="Q4FZR5">
    <property type="interactions" value="1052"/>
</dbReference>
<dbReference type="STRING" id="10116.ENSRNOP00000056334"/>
<dbReference type="GlyGen" id="Q4FZR5">
    <property type="glycosylation" value="2 sites"/>
</dbReference>
<dbReference type="iPTMnet" id="Q4FZR5"/>
<dbReference type="PhosphoSitePlus" id="Q4FZR5"/>
<dbReference type="PaxDb" id="10116-ENSRNOP00000056334"/>
<dbReference type="GeneID" id="307798"/>
<dbReference type="KEGG" id="rno:307798"/>
<dbReference type="UCSC" id="RGD:1565053">
    <property type="organism name" value="rat"/>
</dbReference>
<dbReference type="AGR" id="RGD:1565053"/>
<dbReference type="CTD" id="65057"/>
<dbReference type="RGD" id="1565053">
    <property type="gene designation" value="Acd"/>
</dbReference>
<dbReference type="VEuPathDB" id="HostDB:ENSRNOG00000038973"/>
<dbReference type="eggNOG" id="ENOG502SAN8">
    <property type="taxonomic scope" value="Eukaryota"/>
</dbReference>
<dbReference type="HOGENOM" id="CLU_619569_0_0_1"/>
<dbReference type="InParanoid" id="Q4FZR5"/>
<dbReference type="OrthoDB" id="9899304at2759"/>
<dbReference type="PhylomeDB" id="Q4FZR5"/>
<dbReference type="TreeFam" id="TF338536"/>
<dbReference type="Reactome" id="R-RNO-110330">
    <property type="pathway name" value="Recognition and association of DNA glycosylase with site containing an affected purine"/>
</dbReference>
<dbReference type="Reactome" id="R-RNO-110331">
    <property type="pathway name" value="Cleavage of the damaged purine"/>
</dbReference>
<dbReference type="Reactome" id="R-RNO-171319">
    <property type="pathway name" value="Telomere Extension By Telomerase"/>
</dbReference>
<dbReference type="Reactome" id="R-RNO-174411">
    <property type="pathway name" value="Polymerase switching on the C-strand of the telomere"/>
</dbReference>
<dbReference type="Reactome" id="R-RNO-174414">
    <property type="pathway name" value="Processive synthesis on the C-strand of the telomere"/>
</dbReference>
<dbReference type="Reactome" id="R-RNO-174417">
    <property type="pathway name" value="Telomere C-strand (Lagging Strand) Synthesis"/>
</dbReference>
<dbReference type="Reactome" id="R-RNO-174430">
    <property type="pathway name" value="Telomere C-strand synthesis initiation"/>
</dbReference>
<dbReference type="Reactome" id="R-RNO-174437">
    <property type="pathway name" value="Removal of the Flap Intermediate from the C-strand"/>
</dbReference>
<dbReference type="Reactome" id="R-RNO-2559586">
    <property type="pathway name" value="DNA Damage/Telomere Stress Induced Senescence"/>
</dbReference>
<dbReference type="PRO" id="PR:Q4FZR5"/>
<dbReference type="Proteomes" id="UP000002494">
    <property type="component" value="Chromosome 19"/>
</dbReference>
<dbReference type="Bgee" id="ENSRNOG00000038973">
    <property type="expression patterns" value="Expressed in cerebellum and 20 other cell types or tissues"/>
</dbReference>
<dbReference type="GO" id="GO:0000781">
    <property type="term" value="C:chromosome, telomeric region"/>
    <property type="evidence" value="ECO:0000266"/>
    <property type="project" value="RGD"/>
</dbReference>
<dbReference type="GO" id="GO:0000783">
    <property type="term" value="C:nuclear telomere cap complex"/>
    <property type="evidence" value="ECO:0000266"/>
    <property type="project" value="RGD"/>
</dbReference>
<dbReference type="GO" id="GO:0070187">
    <property type="term" value="C:shelterin complex"/>
    <property type="evidence" value="ECO:0000266"/>
    <property type="project" value="RGD"/>
</dbReference>
<dbReference type="GO" id="GO:0005697">
    <property type="term" value="C:telomerase holoenzyme complex"/>
    <property type="evidence" value="ECO:0007669"/>
    <property type="project" value="InterPro"/>
</dbReference>
<dbReference type="GO" id="GO:0070182">
    <property type="term" value="F:DNA polymerase binding"/>
    <property type="evidence" value="ECO:0000266"/>
    <property type="project" value="RGD"/>
</dbReference>
<dbReference type="GO" id="GO:0044877">
    <property type="term" value="F:protein-containing complex binding"/>
    <property type="evidence" value="ECO:0000266"/>
    <property type="project" value="RGD"/>
</dbReference>
<dbReference type="GO" id="GO:0010521">
    <property type="term" value="F:telomerase inhibitor activity"/>
    <property type="evidence" value="ECO:0000266"/>
    <property type="project" value="RGD"/>
</dbReference>
<dbReference type="GO" id="GO:0042162">
    <property type="term" value="F:telomeric DNA binding"/>
    <property type="evidence" value="ECO:0000266"/>
    <property type="project" value="RGD"/>
</dbReference>
<dbReference type="GO" id="GO:0030326">
    <property type="term" value="P:embryonic limb morphogenesis"/>
    <property type="evidence" value="ECO:0000266"/>
    <property type="project" value="RGD"/>
</dbReference>
<dbReference type="GO" id="GO:0070200">
    <property type="term" value="P:establishment of protein localization to telomere"/>
    <property type="evidence" value="ECO:0000266"/>
    <property type="project" value="RGD"/>
</dbReference>
<dbReference type="GO" id="GO:0006886">
    <property type="term" value="P:intracellular protein transport"/>
    <property type="evidence" value="ECO:0000266"/>
    <property type="project" value="RGD"/>
</dbReference>
<dbReference type="GO" id="GO:0032211">
    <property type="term" value="P:negative regulation of telomere maintenance via telomerase"/>
    <property type="evidence" value="ECO:0000266"/>
    <property type="project" value="RGD"/>
</dbReference>
<dbReference type="GO" id="GO:0031848">
    <property type="term" value="P:protection from non-homologous end joining at telomere"/>
    <property type="evidence" value="ECO:0000266"/>
    <property type="project" value="RGD"/>
</dbReference>
<dbReference type="GO" id="GO:0070198">
    <property type="term" value="P:protein localization to chromosome, telomeric region"/>
    <property type="evidence" value="ECO:0000266"/>
    <property type="project" value="RGD"/>
</dbReference>
<dbReference type="GO" id="GO:0070203">
    <property type="term" value="P:regulation of establishment of protein localization to telomere"/>
    <property type="evidence" value="ECO:0000266"/>
    <property type="project" value="RGD"/>
</dbReference>
<dbReference type="GO" id="GO:0035282">
    <property type="term" value="P:segmentation"/>
    <property type="evidence" value="ECO:0000266"/>
    <property type="project" value="RGD"/>
</dbReference>
<dbReference type="GO" id="GO:0001501">
    <property type="term" value="P:skeletal system development"/>
    <property type="evidence" value="ECO:0000266"/>
    <property type="project" value="RGD"/>
</dbReference>
<dbReference type="GO" id="GO:0032202">
    <property type="term" value="P:telomere assembly"/>
    <property type="evidence" value="ECO:0000266"/>
    <property type="project" value="RGD"/>
</dbReference>
<dbReference type="GO" id="GO:0016233">
    <property type="term" value="P:telomere capping"/>
    <property type="evidence" value="ECO:0000266"/>
    <property type="project" value="RGD"/>
</dbReference>
<dbReference type="GO" id="GO:0000723">
    <property type="term" value="P:telomere maintenance"/>
    <property type="evidence" value="ECO:0000266"/>
    <property type="project" value="RGD"/>
</dbReference>
<dbReference type="GO" id="GO:0007004">
    <property type="term" value="P:telomere maintenance via telomerase"/>
    <property type="evidence" value="ECO:0000266"/>
    <property type="project" value="RGD"/>
</dbReference>
<dbReference type="GO" id="GO:0001655">
    <property type="term" value="P:urogenital system development"/>
    <property type="evidence" value="ECO:0000266"/>
    <property type="project" value="RGD"/>
</dbReference>
<dbReference type="FunFam" id="2.40.50.960:FF:000001">
    <property type="entry name" value="ACD, shelterin complex subunit and telomerase recruitment factor"/>
    <property type="match status" value="1"/>
</dbReference>
<dbReference type="Gene3D" id="2.40.50.960">
    <property type="match status" value="1"/>
</dbReference>
<dbReference type="InterPro" id="IPR028631">
    <property type="entry name" value="ACD"/>
</dbReference>
<dbReference type="InterPro" id="IPR019437">
    <property type="entry name" value="TPP1/Est3"/>
</dbReference>
<dbReference type="PANTHER" id="PTHR14487">
    <property type="entry name" value="ADRENOCORTICAL DYSPLASIA PROTEIN ACD"/>
    <property type="match status" value="1"/>
</dbReference>
<dbReference type="PANTHER" id="PTHR14487:SF3">
    <property type="entry name" value="ADRENOCORTICAL DYSPLASIA PROTEIN HOMOLOG"/>
    <property type="match status" value="1"/>
</dbReference>
<dbReference type="Pfam" id="PF10341">
    <property type="entry name" value="TPP1"/>
    <property type="match status" value="1"/>
</dbReference>
<gene>
    <name evidence="6" type="primary">Acd</name>
</gene>
<sequence>MSNSGRLVLRPWIRELILGSETLSSPQAGHLLKVLQDSETPGPSSAPDTPDTGAVLLVSDGTHSVRCVVTRNAIDTSDWEEKEFGFRGTEGRLLLLQACGLRIQVAQDYAPAEFYLQVDRFNLLPTEQPRVQVTGCNQDSDVQKKLNKCLEDHLSESASSSAGLTLSQLLDEVKEDGDHRGALVRLAESCLVLQGPFTARPLTHWATSCSQATEEAVFTVPSFLLHISENEEQILSSIDSSQKAQENPASPSLMPQEESGASVSLLSALPTSDPGQKDNSQPPPTVCSTSPRAQAPSSTPCSSTPSSPLLTCSPSLSPLRHAPTSYQACETRTQFHKLEFRELQWPIKRRQLLPRTGAQEPHSVWEPPERHRDTSAFQYKYGTPSASLHTQVQTARLSPQLVAWALNIVMESELPQV</sequence>
<name>ACD_RAT</name>
<protein>
    <recommendedName>
        <fullName evidence="5">Adrenocortical dysplasia protein homolog</fullName>
    </recommendedName>
</protein>
<proteinExistence type="evidence at protein level"/>
<accession>Q4FZR5</accession>